<feature type="chain" id="PRO_0000178235" description="dITP/XTP pyrophosphatase">
    <location>
        <begin position="1"/>
        <end position="324"/>
    </location>
</feature>
<feature type="region of interest" description="Unknown">
    <location>
        <begin position="1"/>
        <end position="127"/>
    </location>
</feature>
<feature type="region of interest" description="NTP pyrophosphatase">
    <location>
        <begin position="128"/>
        <end position="324"/>
    </location>
</feature>
<feature type="active site" description="Proton acceptor" evidence="1">
    <location>
        <position position="193"/>
    </location>
</feature>
<feature type="binding site" evidence="1">
    <location>
        <begin position="131"/>
        <end position="136"/>
    </location>
    <ligand>
        <name>substrate</name>
    </ligand>
</feature>
<feature type="binding site" evidence="1">
    <location>
        <position position="164"/>
    </location>
    <ligand>
        <name>Mg(2+)</name>
        <dbReference type="ChEBI" id="CHEBI:18420"/>
    </ligand>
</feature>
<feature type="binding site" evidence="1">
    <location>
        <position position="193"/>
    </location>
    <ligand>
        <name>Mg(2+)</name>
        <dbReference type="ChEBI" id="CHEBI:18420"/>
    </ligand>
</feature>
<feature type="binding site" evidence="1">
    <location>
        <position position="194"/>
    </location>
    <ligand>
        <name>substrate</name>
    </ligand>
</feature>
<feature type="binding site" evidence="1">
    <location>
        <begin position="277"/>
        <end position="280"/>
    </location>
    <ligand>
        <name>substrate</name>
    </ligand>
</feature>
<feature type="binding site" evidence="1">
    <location>
        <position position="300"/>
    </location>
    <ligand>
        <name>substrate</name>
    </ligand>
</feature>
<feature type="binding site" evidence="1">
    <location>
        <begin position="305"/>
        <end position="306"/>
    </location>
    <ligand>
        <name>substrate</name>
    </ligand>
</feature>
<keyword id="KW-0378">Hydrolase</keyword>
<keyword id="KW-0460">Magnesium</keyword>
<keyword id="KW-0479">Metal-binding</keyword>
<keyword id="KW-0546">Nucleotide metabolism</keyword>
<keyword id="KW-0547">Nucleotide-binding</keyword>
<sequence>MTKTIFESKTEGNWFLGSFQAFNYFTCFGNDESYEAIQDVFHRLLSTLKVEGLQLHVVQMTSDFQLLAFLVDMINQEYSRHIKVTQHKGAILVSEDDQLFLVHLPKEGTSLEKFFDLKNDNNFGDTILIATHNEGKTKEFRELFGKLGLKVENLNDYPDLPEVEETGMTFEENARLKAETISKLTGKMVISDDSGLKVDALGGLPGVWSARFSGPDATDARNNAKLLHELAMVFDKERRSAQFHTTLVVSAPNKESLVVEAEWPGYIGTEPKGENGFGYDPLFIVGEGSRTAAELSAQEKNNLSHRGQAVRKLMEVFPKWQLEN</sequence>
<dbReference type="EC" id="3.6.1.66" evidence="1"/>
<dbReference type="EMBL" id="AL766852">
    <property type="protein sequence ID" value="CAD47307.1"/>
    <property type="molecule type" value="Genomic_DNA"/>
</dbReference>
<dbReference type="RefSeq" id="WP_000167813.1">
    <property type="nucleotide sequence ID" value="NC_004368.1"/>
</dbReference>
<dbReference type="SMR" id="Q8E3V8"/>
<dbReference type="KEGG" id="san:gbs1648"/>
<dbReference type="eggNOG" id="COG0127">
    <property type="taxonomic scope" value="Bacteria"/>
</dbReference>
<dbReference type="HOGENOM" id="CLU_863088_0_0_9"/>
<dbReference type="Proteomes" id="UP000000823">
    <property type="component" value="Chromosome"/>
</dbReference>
<dbReference type="GO" id="GO:0005829">
    <property type="term" value="C:cytosol"/>
    <property type="evidence" value="ECO:0007669"/>
    <property type="project" value="TreeGrafter"/>
</dbReference>
<dbReference type="GO" id="GO:0035870">
    <property type="term" value="F:dITP diphosphatase activity"/>
    <property type="evidence" value="ECO:0007669"/>
    <property type="project" value="RHEA"/>
</dbReference>
<dbReference type="GO" id="GO:0036220">
    <property type="term" value="F:ITP diphosphatase activity"/>
    <property type="evidence" value="ECO:0007669"/>
    <property type="project" value="UniProtKB-EC"/>
</dbReference>
<dbReference type="GO" id="GO:0046872">
    <property type="term" value="F:metal ion binding"/>
    <property type="evidence" value="ECO:0007669"/>
    <property type="project" value="UniProtKB-KW"/>
</dbReference>
<dbReference type="GO" id="GO:0000166">
    <property type="term" value="F:nucleotide binding"/>
    <property type="evidence" value="ECO:0007669"/>
    <property type="project" value="UniProtKB-KW"/>
</dbReference>
<dbReference type="GO" id="GO:0017111">
    <property type="term" value="F:ribonucleoside triphosphate phosphatase activity"/>
    <property type="evidence" value="ECO:0007669"/>
    <property type="project" value="InterPro"/>
</dbReference>
<dbReference type="GO" id="GO:0036222">
    <property type="term" value="F:XTP diphosphatase activity"/>
    <property type="evidence" value="ECO:0007669"/>
    <property type="project" value="RHEA"/>
</dbReference>
<dbReference type="GO" id="GO:0009117">
    <property type="term" value="P:nucleotide metabolic process"/>
    <property type="evidence" value="ECO:0007669"/>
    <property type="project" value="UniProtKB-KW"/>
</dbReference>
<dbReference type="GO" id="GO:0009146">
    <property type="term" value="P:purine nucleoside triphosphate catabolic process"/>
    <property type="evidence" value="ECO:0007669"/>
    <property type="project" value="UniProtKB-UniRule"/>
</dbReference>
<dbReference type="CDD" id="cd00515">
    <property type="entry name" value="HAM1"/>
    <property type="match status" value="1"/>
</dbReference>
<dbReference type="FunFam" id="3.90.950.10:FF:000001">
    <property type="entry name" value="dITP/XTP pyrophosphatase"/>
    <property type="match status" value="1"/>
</dbReference>
<dbReference type="Gene3D" id="3.90.950.10">
    <property type="match status" value="1"/>
</dbReference>
<dbReference type="HAMAP" id="MF_01405">
    <property type="entry name" value="Non_canon_purine_NTPase"/>
    <property type="match status" value="1"/>
</dbReference>
<dbReference type="InterPro" id="IPR020922">
    <property type="entry name" value="dITP/XTP_pyrophosphatase"/>
</dbReference>
<dbReference type="InterPro" id="IPR029001">
    <property type="entry name" value="ITPase-like_fam"/>
</dbReference>
<dbReference type="InterPro" id="IPR002637">
    <property type="entry name" value="RdgB/HAM1"/>
</dbReference>
<dbReference type="NCBIfam" id="NF002698">
    <property type="entry name" value="PRK02491.1"/>
    <property type="match status" value="1"/>
</dbReference>
<dbReference type="NCBIfam" id="NF011397">
    <property type="entry name" value="PRK14822.1"/>
    <property type="match status" value="1"/>
</dbReference>
<dbReference type="NCBIfam" id="TIGR00042">
    <property type="entry name" value="RdgB/HAM1 family non-canonical purine NTP pyrophosphatase"/>
    <property type="match status" value="1"/>
</dbReference>
<dbReference type="PANTHER" id="PTHR11067:SF9">
    <property type="entry name" value="INOSINE TRIPHOSPHATE PYROPHOSPHATASE"/>
    <property type="match status" value="1"/>
</dbReference>
<dbReference type="PANTHER" id="PTHR11067">
    <property type="entry name" value="INOSINE TRIPHOSPHATE PYROPHOSPHATASE/HAM1 PROTEIN"/>
    <property type="match status" value="1"/>
</dbReference>
<dbReference type="Pfam" id="PF01725">
    <property type="entry name" value="Ham1p_like"/>
    <property type="match status" value="1"/>
</dbReference>
<dbReference type="SUPFAM" id="SSF52972">
    <property type="entry name" value="ITPase-like"/>
    <property type="match status" value="1"/>
</dbReference>
<organism>
    <name type="scientific">Streptococcus agalactiae serotype III (strain NEM316)</name>
    <dbReference type="NCBI Taxonomy" id="211110"/>
    <lineage>
        <taxon>Bacteria</taxon>
        <taxon>Bacillati</taxon>
        <taxon>Bacillota</taxon>
        <taxon>Bacilli</taxon>
        <taxon>Lactobacillales</taxon>
        <taxon>Streptococcaceae</taxon>
        <taxon>Streptococcus</taxon>
    </lineage>
</organism>
<reference key="1">
    <citation type="journal article" date="2002" name="Mol. Microbiol.">
        <title>Genome sequence of Streptococcus agalactiae, a pathogen causing invasive neonatal disease.</title>
        <authorList>
            <person name="Glaser P."/>
            <person name="Rusniok C."/>
            <person name="Buchrieser C."/>
            <person name="Chevalier F."/>
            <person name="Frangeul L."/>
            <person name="Msadek T."/>
            <person name="Zouine M."/>
            <person name="Couve E."/>
            <person name="Lalioui L."/>
            <person name="Poyart C."/>
            <person name="Trieu-Cuot P."/>
            <person name="Kunst F."/>
        </authorList>
    </citation>
    <scope>NUCLEOTIDE SEQUENCE [LARGE SCALE GENOMIC DNA]</scope>
    <source>
        <strain>NEM316</strain>
    </source>
</reference>
<name>IXTPA_STRA3</name>
<evidence type="ECO:0000255" key="1">
    <source>
        <dbReference type="HAMAP-Rule" id="MF_01405"/>
    </source>
</evidence>
<evidence type="ECO:0000305" key="2"/>
<accession>Q8E3V8</accession>
<comment type="function">
    <text evidence="1">Pyrophosphatase that catalyzes the hydrolysis of nucleoside triphosphates to their monophosphate derivatives, with a high preference for the non-canonical purine nucleotides XTP (xanthosine triphosphate), dITP (deoxyinosine triphosphate) and ITP. Seems to function as a house-cleaning enzyme that removes non-canonical purine nucleotides from the nucleotide pool, thus preventing their incorporation into DNA/RNA and avoiding chromosomal lesions.</text>
</comment>
<comment type="catalytic activity">
    <reaction evidence="1">
        <text>XTP + H2O = XMP + diphosphate + H(+)</text>
        <dbReference type="Rhea" id="RHEA:28610"/>
        <dbReference type="ChEBI" id="CHEBI:15377"/>
        <dbReference type="ChEBI" id="CHEBI:15378"/>
        <dbReference type="ChEBI" id="CHEBI:33019"/>
        <dbReference type="ChEBI" id="CHEBI:57464"/>
        <dbReference type="ChEBI" id="CHEBI:61314"/>
        <dbReference type="EC" id="3.6.1.66"/>
    </reaction>
</comment>
<comment type="catalytic activity">
    <reaction evidence="1">
        <text>dITP + H2O = dIMP + diphosphate + H(+)</text>
        <dbReference type="Rhea" id="RHEA:28342"/>
        <dbReference type="ChEBI" id="CHEBI:15377"/>
        <dbReference type="ChEBI" id="CHEBI:15378"/>
        <dbReference type="ChEBI" id="CHEBI:33019"/>
        <dbReference type="ChEBI" id="CHEBI:61194"/>
        <dbReference type="ChEBI" id="CHEBI:61382"/>
        <dbReference type="EC" id="3.6.1.66"/>
    </reaction>
</comment>
<comment type="catalytic activity">
    <reaction evidence="1">
        <text>ITP + H2O = IMP + diphosphate + H(+)</text>
        <dbReference type="Rhea" id="RHEA:29399"/>
        <dbReference type="ChEBI" id="CHEBI:15377"/>
        <dbReference type="ChEBI" id="CHEBI:15378"/>
        <dbReference type="ChEBI" id="CHEBI:33019"/>
        <dbReference type="ChEBI" id="CHEBI:58053"/>
        <dbReference type="ChEBI" id="CHEBI:61402"/>
        <dbReference type="EC" id="3.6.1.66"/>
    </reaction>
</comment>
<comment type="cofactor">
    <cofactor evidence="1">
        <name>Mg(2+)</name>
        <dbReference type="ChEBI" id="CHEBI:18420"/>
    </cofactor>
    <text evidence="1">Binds 1 Mg(2+) ion per subunit.</text>
</comment>
<comment type="subunit">
    <text evidence="1">Homodimer.</text>
</comment>
<comment type="similarity">
    <text evidence="1 2">Belongs to the HAM1 NTPase family.</text>
</comment>
<gene>
    <name type="ordered locus">gbs1648</name>
</gene>
<protein>
    <recommendedName>
        <fullName evidence="1">dITP/XTP pyrophosphatase</fullName>
        <ecNumber evidence="1">3.6.1.66</ecNumber>
    </recommendedName>
    <alternativeName>
        <fullName evidence="1">Non-canonical purine NTP pyrophosphatase</fullName>
    </alternativeName>
    <alternativeName>
        <fullName evidence="1">Non-standard purine NTP pyrophosphatase</fullName>
    </alternativeName>
    <alternativeName>
        <fullName evidence="1">Nucleoside-triphosphate diphosphatase</fullName>
    </alternativeName>
    <alternativeName>
        <fullName evidence="1">Nucleoside-triphosphate pyrophosphatase</fullName>
        <shortName evidence="1">NTPase</shortName>
    </alternativeName>
</protein>
<proteinExistence type="inferred from homology"/>